<feature type="chain" id="PRO_0000204692" description="Acyl-coenzyme A oxidase">
    <location>
        <begin position="1"/>
        <end position="748"/>
    </location>
</feature>
<name>ACOX_CANGA</name>
<protein>
    <recommendedName>
        <fullName>Acyl-coenzyme A oxidase</fullName>
        <shortName>Acyl-CoA oxidase</shortName>
        <ecNumber>1.3.3.6</ecNumber>
    </recommendedName>
</protein>
<organism>
    <name type="scientific">Candida glabrata (strain ATCC 2001 / BCRC 20586 / JCM 3761 / NBRC 0622 / NRRL Y-65 / CBS 138)</name>
    <name type="common">Yeast</name>
    <name type="synonym">Nakaseomyces glabratus</name>
    <dbReference type="NCBI Taxonomy" id="284593"/>
    <lineage>
        <taxon>Eukaryota</taxon>
        <taxon>Fungi</taxon>
        <taxon>Dikarya</taxon>
        <taxon>Ascomycota</taxon>
        <taxon>Saccharomycotina</taxon>
        <taxon>Saccharomycetes</taxon>
        <taxon>Saccharomycetales</taxon>
        <taxon>Saccharomycetaceae</taxon>
        <taxon>Nakaseomyces</taxon>
    </lineage>
</organism>
<proteinExistence type="inferred from homology"/>
<evidence type="ECO:0000250" key="1"/>
<evidence type="ECO:0000305" key="2"/>
<sequence>MTKLSTVDPNASVLNPQRFIQRERENCSIDIDQVNTFLESDPRSRDLTHLIVDQLVNDPIIKADSATYDQTKLTQREVTVKKIARMALYMEQDIKTVRKHFRDTDLLKSLQDFGDTTTPPLTNKDLAIFDKRLSLVANMDPQLSTRIGVHLGLFGNCIKGNGTDEQIKYWLQTRGAILIKGIYGCFAMTELGHGSNVAQLQTTATYDQESDTFIINTPDLAATKWWIGGAAHSATHTACYARLLVNGKDYGVKTFVVPLRDPSSLQLMPGIAIGDIGAKMGRDGIDNGWIQFRNVVIPREFMLSRFTKVHRNPGATPTVEVDPQLDQISGYSALLSGRVNMVMDSFRFGSKFATIATRYAVGRQQFADKPGQPEKQLIDYPLHQYRVLPQIVIPYIISPAAFSLLNFYYSTLDELYAASSKNDKRALVVVSQKLKNLFIDSASLKATNTWLVAQLIDELRQTCGGHGYSGYNAFGKGYNDWVVQCTWEGDNNILSLTSAKSILKKFVDSATKGKYNKELDKRSFRYLDPQFIRKVFTSSSENKLDDLYDYTNIWAVALLKLLRHIAKQVDSTKDLDGASKLLVLVSKFHALYVMLNTYYEKLNSPTDSYVTCPKTKEQLWNVYKLFSLYFIDKHAGEFQQFKILSPDQISQVVQPRLLKLLPEIRKECISLTDSFKWPDGMLNAPIGYYDGDIYHNYFNEVVKNNPVEKDGAGIPPYHELLANMLTRGDEFARLGGANNAEILSKLTK</sequence>
<reference key="1">
    <citation type="journal article" date="2004" name="Nature">
        <title>Genome evolution in yeasts.</title>
        <authorList>
            <person name="Dujon B."/>
            <person name="Sherman D."/>
            <person name="Fischer G."/>
            <person name="Durrens P."/>
            <person name="Casaregola S."/>
            <person name="Lafontaine I."/>
            <person name="de Montigny J."/>
            <person name="Marck C."/>
            <person name="Neuveglise C."/>
            <person name="Talla E."/>
            <person name="Goffard N."/>
            <person name="Frangeul L."/>
            <person name="Aigle M."/>
            <person name="Anthouard V."/>
            <person name="Babour A."/>
            <person name="Barbe V."/>
            <person name="Barnay S."/>
            <person name="Blanchin S."/>
            <person name="Beckerich J.-M."/>
            <person name="Beyne E."/>
            <person name="Bleykasten C."/>
            <person name="Boisrame A."/>
            <person name="Boyer J."/>
            <person name="Cattolico L."/>
            <person name="Confanioleri F."/>
            <person name="de Daruvar A."/>
            <person name="Despons L."/>
            <person name="Fabre E."/>
            <person name="Fairhead C."/>
            <person name="Ferry-Dumazet H."/>
            <person name="Groppi A."/>
            <person name="Hantraye F."/>
            <person name="Hennequin C."/>
            <person name="Jauniaux N."/>
            <person name="Joyet P."/>
            <person name="Kachouri R."/>
            <person name="Kerrest A."/>
            <person name="Koszul R."/>
            <person name="Lemaire M."/>
            <person name="Lesur I."/>
            <person name="Ma L."/>
            <person name="Muller H."/>
            <person name="Nicaud J.-M."/>
            <person name="Nikolski M."/>
            <person name="Oztas S."/>
            <person name="Ozier-Kalogeropoulos O."/>
            <person name="Pellenz S."/>
            <person name="Potier S."/>
            <person name="Richard G.-F."/>
            <person name="Straub M.-L."/>
            <person name="Suleau A."/>
            <person name="Swennen D."/>
            <person name="Tekaia F."/>
            <person name="Wesolowski-Louvel M."/>
            <person name="Westhof E."/>
            <person name="Wirth B."/>
            <person name="Zeniou-Meyer M."/>
            <person name="Zivanovic Y."/>
            <person name="Bolotin-Fukuhara M."/>
            <person name="Thierry A."/>
            <person name="Bouchier C."/>
            <person name="Caudron B."/>
            <person name="Scarpelli C."/>
            <person name="Gaillardin C."/>
            <person name="Weissenbach J."/>
            <person name="Wincker P."/>
            <person name="Souciet J.-L."/>
        </authorList>
    </citation>
    <scope>NUCLEOTIDE SEQUENCE [LARGE SCALE GENOMIC DNA]</scope>
    <source>
        <strain>ATCC 2001 / BCRC 20586 / JCM 3761 / NBRC 0622 / NRRL Y-65 / CBS 138</strain>
    </source>
</reference>
<dbReference type="EC" id="1.3.3.6"/>
<dbReference type="EMBL" id="CR380947">
    <property type="protein sequence ID" value="CAG57823.1"/>
    <property type="molecule type" value="Genomic_DNA"/>
</dbReference>
<dbReference type="RefSeq" id="XP_444930.1">
    <property type="nucleotide sequence ID" value="XM_444930.1"/>
</dbReference>
<dbReference type="SMR" id="Q6FY63"/>
<dbReference type="FunCoup" id="Q6FY63">
    <property type="interactions" value="444"/>
</dbReference>
<dbReference type="STRING" id="284593.Q6FY63"/>
<dbReference type="EnsemblFungi" id="CAGL0A03740g-T">
    <property type="protein sequence ID" value="CAGL0A03740g-T-p1"/>
    <property type="gene ID" value="CAGL0A03740g"/>
</dbReference>
<dbReference type="KEGG" id="cgr:2886280"/>
<dbReference type="CGD" id="CAL0126919">
    <property type="gene designation" value="CAGL0A03740g"/>
</dbReference>
<dbReference type="VEuPathDB" id="FungiDB:B1J91_A03740g"/>
<dbReference type="VEuPathDB" id="FungiDB:CAGL0A03740g"/>
<dbReference type="eggNOG" id="KOG0136">
    <property type="taxonomic scope" value="Eukaryota"/>
</dbReference>
<dbReference type="HOGENOM" id="CLU_014629_3_1_1"/>
<dbReference type="InParanoid" id="Q6FY63"/>
<dbReference type="OMA" id="SINKRFA"/>
<dbReference type="UniPathway" id="UPA00661"/>
<dbReference type="Proteomes" id="UP000002428">
    <property type="component" value="Chromosome A"/>
</dbReference>
<dbReference type="GO" id="GO:0005782">
    <property type="term" value="C:peroxisomal matrix"/>
    <property type="evidence" value="ECO:0007669"/>
    <property type="project" value="EnsemblFungi"/>
</dbReference>
<dbReference type="GO" id="GO:0003997">
    <property type="term" value="F:acyl-CoA oxidase activity"/>
    <property type="evidence" value="ECO:0007669"/>
    <property type="project" value="UniProtKB-EC"/>
</dbReference>
<dbReference type="GO" id="GO:0071949">
    <property type="term" value="F:FAD binding"/>
    <property type="evidence" value="ECO:0007669"/>
    <property type="project" value="InterPro"/>
</dbReference>
<dbReference type="GO" id="GO:0005504">
    <property type="term" value="F:fatty acid binding"/>
    <property type="evidence" value="ECO:0007669"/>
    <property type="project" value="TreeGrafter"/>
</dbReference>
<dbReference type="GO" id="GO:0033540">
    <property type="term" value="P:fatty acid beta-oxidation using acyl-CoA oxidase"/>
    <property type="evidence" value="ECO:0007669"/>
    <property type="project" value="UniProtKB-UniPathway"/>
</dbReference>
<dbReference type="GO" id="GO:0055088">
    <property type="term" value="P:lipid homeostasis"/>
    <property type="evidence" value="ECO:0007669"/>
    <property type="project" value="TreeGrafter"/>
</dbReference>
<dbReference type="FunFam" id="1.20.140.10:FF:000015">
    <property type="entry name" value="Acyl-coenzyme A oxidase"/>
    <property type="match status" value="1"/>
</dbReference>
<dbReference type="FunFam" id="1.20.140.10:FF:000041">
    <property type="entry name" value="Acyl-coenzyme A oxidase"/>
    <property type="match status" value="1"/>
</dbReference>
<dbReference type="FunFam" id="2.40.110.10:FF:000003">
    <property type="entry name" value="Acyl-coenzyme A oxidase"/>
    <property type="match status" value="1"/>
</dbReference>
<dbReference type="Gene3D" id="1.10.540.10">
    <property type="entry name" value="Acyl-CoA dehydrogenase/oxidase, N-terminal domain"/>
    <property type="match status" value="1"/>
</dbReference>
<dbReference type="Gene3D" id="2.40.110.10">
    <property type="entry name" value="Butyryl-CoA Dehydrogenase, subunit A, domain 2"/>
    <property type="match status" value="1"/>
</dbReference>
<dbReference type="Gene3D" id="1.20.140.10">
    <property type="entry name" value="Butyryl-CoA Dehydrogenase, subunit A, domain 3"/>
    <property type="match status" value="2"/>
</dbReference>
<dbReference type="InterPro" id="IPR055060">
    <property type="entry name" value="ACOX_C_alpha1"/>
</dbReference>
<dbReference type="InterPro" id="IPR029320">
    <property type="entry name" value="Acyl-CoA_ox_N"/>
</dbReference>
<dbReference type="InterPro" id="IPR006091">
    <property type="entry name" value="Acyl-CoA_Oxase/DH_mid-dom"/>
</dbReference>
<dbReference type="InterPro" id="IPR046373">
    <property type="entry name" value="Acyl-CoA_Oxase/DH_mid-dom_sf"/>
</dbReference>
<dbReference type="InterPro" id="IPR012258">
    <property type="entry name" value="Acyl-CoA_oxidase"/>
</dbReference>
<dbReference type="InterPro" id="IPR002655">
    <property type="entry name" value="Acyl-CoA_oxidase_C"/>
</dbReference>
<dbReference type="InterPro" id="IPR036250">
    <property type="entry name" value="AcylCo_DH-like_C"/>
</dbReference>
<dbReference type="InterPro" id="IPR037069">
    <property type="entry name" value="AcylCoA_DH/ox_N_sf"/>
</dbReference>
<dbReference type="InterPro" id="IPR009100">
    <property type="entry name" value="AcylCoA_DH/oxidase_NM_dom_sf"/>
</dbReference>
<dbReference type="PANTHER" id="PTHR10909:SF352">
    <property type="entry name" value="ACYL-COENZYME A OXIDASE-LIKE PROTEIN"/>
    <property type="match status" value="1"/>
</dbReference>
<dbReference type="PANTHER" id="PTHR10909">
    <property type="entry name" value="ELECTRON TRANSPORT OXIDOREDUCTASE"/>
    <property type="match status" value="1"/>
</dbReference>
<dbReference type="Pfam" id="PF01756">
    <property type="entry name" value="ACOX"/>
    <property type="match status" value="1"/>
</dbReference>
<dbReference type="Pfam" id="PF22924">
    <property type="entry name" value="ACOX_C_alpha1"/>
    <property type="match status" value="1"/>
</dbReference>
<dbReference type="Pfam" id="PF02770">
    <property type="entry name" value="Acyl-CoA_dh_M"/>
    <property type="match status" value="1"/>
</dbReference>
<dbReference type="Pfam" id="PF14749">
    <property type="entry name" value="Acyl-CoA_ox_N"/>
    <property type="match status" value="1"/>
</dbReference>
<dbReference type="PIRSF" id="PIRSF000168">
    <property type="entry name" value="Acyl-CoA_oxidase"/>
    <property type="match status" value="1"/>
</dbReference>
<dbReference type="SUPFAM" id="SSF47203">
    <property type="entry name" value="Acyl-CoA dehydrogenase C-terminal domain-like"/>
    <property type="match status" value="2"/>
</dbReference>
<dbReference type="SUPFAM" id="SSF56645">
    <property type="entry name" value="Acyl-CoA dehydrogenase NM domain-like"/>
    <property type="match status" value="1"/>
</dbReference>
<gene>
    <name type="primary">POX1</name>
    <name type="ordered locus">CAGL0A03740g</name>
</gene>
<accession>Q6FY63</accession>
<keyword id="KW-0274">FAD</keyword>
<keyword id="KW-0276">Fatty acid metabolism</keyword>
<keyword id="KW-0285">Flavoprotein</keyword>
<keyword id="KW-0443">Lipid metabolism</keyword>
<keyword id="KW-0560">Oxidoreductase</keyword>
<keyword id="KW-0576">Peroxisome</keyword>
<keyword id="KW-1185">Reference proteome</keyword>
<comment type="catalytic activity">
    <reaction>
        <text>a 2,3-saturated acyl-CoA + O2 = a (2E)-enoyl-CoA + H2O2</text>
        <dbReference type="Rhea" id="RHEA:38959"/>
        <dbReference type="ChEBI" id="CHEBI:15379"/>
        <dbReference type="ChEBI" id="CHEBI:16240"/>
        <dbReference type="ChEBI" id="CHEBI:58856"/>
        <dbReference type="ChEBI" id="CHEBI:65111"/>
        <dbReference type="EC" id="1.3.3.6"/>
    </reaction>
</comment>
<comment type="cofactor">
    <cofactor evidence="1">
        <name>FAD</name>
        <dbReference type="ChEBI" id="CHEBI:57692"/>
    </cofactor>
</comment>
<comment type="pathway">
    <text>Lipid metabolism; peroxisomal fatty acid beta-oxidation.</text>
</comment>
<comment type="subcellular location">
    <subcellularLocation>
        <location evidence="1">Peroxisome</location>
    </subcellularLocation>
</comment>
<comment type="similarity">
    <text evidence="2">Belongs to the acyl-CoA oxidase family.</text>
</comment>